<reference key="1">
    <citation type="submission" date="2008-01" db="EMBL/GenBank/DDBJ databases">
        <title>Complete sequence of Pseudomonas putida GB-1.</title>
        <authorList>
            <consortium name="US DOE Joint Genome Institute"/>
            <person name="Copeland A."/>
            <person name="Lucas S."/>
            <person name="Lapidus A."/>
            <person name="Barry K."/>
            <person name="Glavina del Rio T."/>
            <person name="Dalin E."/>
            <person name="Tice H."/>
            <person name="Pitluck S."/>
            <person name="Bruce D."/>
            <person name="Goodwin L."/>
            <person name="Chertkov O."/>
            <person name="Brettin T."/>
            <person name="Detter J.C."/>
            <person name="Han C."/>
            <person name="Kuske C.R."/>
            <person name="Schmutz J."/>
            <person name="Larimer F."/>
            <person name="Land M."/>
            <person name="Hauser L."/>
            <person name="Kyrpides N."/>
            <person name="Kim E."/>
            <person name="McCarthy J.K."/>
            <person name="Richardson P."/>
        </authorList>
    </citation>
    <scope>NUCLEOTIDE SEQUENCE [LARGE SCALE GENOMIC DNA]</scope>
    <source>
        <strain>GB-1</strain>
    </source>
</reference>
<keyword id="KW-0521">NADP</keyword>
<keyword id="KW-0560">Oxidoreductase</keyword>
<keyword id="KW-0627">Porphyrin biosynthesis</keyword>
<accession>B0KNE3</accession>
<comment type="function">
    <text evidence="1">Catalyzes the NADPH-dependent reduction of glutamyl-tRNA(Glu) to glutamate 1-semialdehyde (GSA).</text>
</comment>
<comment type="catalytic activity">
    <reaction evidence="1">
        <text>(S)-4-amino-5-oxopentanoate + tRNA(Glu) + NADP(+) = L-glutamyl-tRNA(Glu) + NADPH + H(+)</text>
        <dbReference type="Rhea" id="RHEA:12344"/>
        <dbReference type="Rhea" id="RHEA-COMP:9663"/>
        <dbReference type="Rhea" id="RHEA-COMP:9680"/>
        <dbReference type="ChEBI" id="CHEBI:15378"/>
        <dbReference type="ChEBI" id="CHEBI:57501"/>
        <dbReference type="ChEBI" id="CHEBI:57783"/>
        <dbReference type="ChEBI" id="CHEBI:58349"/>
        <dbReference type="ChEBI" id="CHEBI:78442"/>
        <dbReference type="ChEBI" id="CHEBI:78520"/>
        <dbReference type="EC" id="1.2.1.70"/>
    </reaction>
</comment>
<comment type="pathway">
    <text evidence="1">Porphyrin-containing compound metabolism; protoporphyrin-IX biosynthesis; 5-aminolevulinate from L-glutamyl-tRNA(Glu): step 1/2.</text>
</comment>
<comment type="subunit">
    <text evidence="1">Homodimer.</text>
</comment>
<comment type="domain">
    <text evidence="1">Possesses an unusual extended V-shaped dimeric structure with each monomer consisting of three distinct domains arranged along a curved 'spinal' alpha-helix. The N-terminal catalytic domain specifically recognizes the glutamate moiety of the substrate. The second domain is the NADPH-binding domain, and the third C-terminal domain is responsible for dimerization.</text>
</comment>
<comment type="miscellaneous">
    <text evidence="1">During catalysis, the active site Cys acts as a nucleophile attacking the alpha-carbonyl group of tRNA-bound glutamate with the formation of a thioester intermediate between enzyme and glutamate, and the concomitant release of tRNA(Glu). The thioester intermediate is finally reduced by direct hydride transfer from NADPH, to form the product GSA.</text>
</comment>
<comment type="similarity">
    <text evidence="1">Belongs to the glutamyl-tRNA reductase family.</text>
</comment>
<dbReference type="EC" id="1.2.1.70" evidence="1"/>
<dbReference type="EMBL" id="CP000926">
    <property type="protein sequence ID" value="ABY96683.1"/>
    <property type="molecule type" value="Genomic_DNA"/>
</dbReference>
<dbReference type="RefSeq" id="WP_012270484.1">
    <property type="nucleotide sequence ID" value="NC_010322.1"/>
</dbReference>
<dbReference type="SMR" id="B0KNE3"/>
<dbReference type="KEGG" id="ppg:PputGB1_0773"/>
<dbReference type="eggNOG" id="COG0373">
    <property type="taxonomic scope" value="Bacteria"/>
</dbReference>
<dbReference type="HOGENOM" id="CLU_035113_2_2_6"/>
<dbReference type="UniPathway" id="UPA00251">
    <property type="reaction ID" value="UER00316"/>
</dbReference>
<dbReference type="Proteomes" id="UP000002157">
    <property type="component" value="Chromosome"/>
</dbReference>
<dbReference type="GO" id="GO:0008883">
    <property type="term" value="F:glutamyl-tRNA reductase activity"/>
    <property type="evidence" value="ECO:0007669"/>
    <property type="project" value="UniProtKB-UniRule"/>
</dbReference>
<dbReference type="GO" id="GO:0050661">
    <property type="term" value="F:NADP binding"/>
    <property type="evidence" value="ECO:0007669"/>
    <property type="project" value="InterPro"/>
</dbReference>
<dbReference type="GO" id="GO:0019353">
    <property type="term" value="P:protoporphyrinogen IX biosynthetic process from glutamate"/>
    <property type="evidence" value="ECO:0007669"/>
    <property type="project" value="TreeGrafter"/>
</dbReference>
<dbReference type="CDD" id="cd05213">
    <property type="entry name" value="NAD_bind_Glutamyl_tRNA_reduct"/>
    <property type="match status" value="1"/>
</dbReference>
<dbReference type="FunFam" id="3.30.460.30:FF:000001">
    <property type="entry name" value="Glutamyl-tRNA reductase"/>
    <property type="match status" value="1"/>
</dbReference>
<dbReference type="FunFam" id="3.40.50.720:FF:000031">
    <property type="entry name" value="Glutamyl-tRNA reductase"/>
    <property type="match status" value="1"/>
</dbReference>
<dbReference type="Gene3D" id="3.30.460.30">
    <property type="entry name" value="Glutamyl-tRNA reductase, N-terminal domain"/>
    <property type="match status" value="1"/>
</dbReference>
<dbReference type="Gene3D" id="3.40.50.720">
    <property type="entry name" value="NAD(P)-binding Rossmann-like Domain"/>
    <property type="match status" value="1"/>
</dbReference>
<dbReference type="HAMAP" id="MF_00087">
    <property type="entry name" value="Glu_tRNA_reductase"/>
    <property type="match status" value="1"/>
</dbReference>
<dbReference type="InterPro" id="IPR000343">
    <property type="entry name" value="4pyrrol_synth_GluRdtase"/>
</dbReference>
<dbReference type="InterPro" id="IPR015896">
    <property type="entry name" value="4pyrrol_synth_GluRdtase_dimer"/>
</dbReference>
<dbReference type="InterPro" id="IPR015895">
    <property type="entry name" value="4pyrrol_synth_GluRdtase_N"/>
</dbReference>
<dbReference type="InterPro" id="IPR018214">
    <property type="entry name" value="GluRdtase_CS"/>
</dbReference>
<dbReference type="InterPro" id="IPR036453">
    <property type="entry name" value="GluRdtase_dimer_dom_sf"/>
</dbReference>
<dbReference type="InterPro" id="IPR036343">
    <property type="entry name" value="GluRdtase_N_sf"/>
</dbReference>
<dbReference type="InterPro" id="IPR036291">
    <property type="entry name" value="NAD(P)-bd_dom_sf"/>
</dbReference>
<dbReference type="InterPro" id="IPR006151">
    <property type="entry name" value="Shikm_DH/Glu-tRNA_Rdtase"/>
</dbReference>
<dbReference type="NCBIfam" id="TIGR01035">
    <property type="entry name" value="hemA"/>
    <property type="match status" value="1"/>
</dbReference>
<dbReference type="PANTHER" id="PTHR43013">
    <property type="entry name" value="GLUTAMYL-TRNA REDUCTASE"/>
    <property type="match status" value="1"/>
</dbReference>
<dbReference type="PANTHER" id="PTHR43013:SF1">
    <property type="entry name" value="GLUTAMYL-TRNA REDUCTASE"/>
    <property type="match status" value="1"/>
</dbReference>
<dbReference type="Pfam" id="PF00745">
    <property type="entry name" value="GlutR_dimer"/>
    <property type="match status" value="1"/>
</dbReference>
<dbReference type="Pfam" id="PF05201">
    <property type="entry name" value="GlutR_N"/>
    <property type="match status" value="1"/>
</dbReference>
<dbReference type="Pfam" id="PF01488">
    <property type="entry name" value="Shikimate_DH"/>
    <property type="match status" value="1"/>
</dbReference>
<dbReference type="PIRSF" id="PIRSF000445">
    <property type="entry name" value="4pyrrol_synth_GluRdtase"/>
    <property type="match status" value="1"/>
</dbReference>
<dbReference type="SUPFAM" id="SSF69742">
    <property type="entry name" value="Glutamyl tRNA-reductase catalytic, N-terminal domain"/>
    <property type="match status" value="1"/>
</dbReference>
<dbReference type="SUPFAM" id="SSF69075">
    <property type="entry name" value="Glutamyl tRNA-reductase dimerization domain"/>
    <property type="match status" value="1"/>
</dbReference>
<dbReference type="SUPFAM" id="SSF51735">
    <property type="entry name" value="NAD(P)-binding Rossmann-fold domains"/>
    <property type="match status" value="1"/>
</dbReference>
<dbReference type="PROSITE" id="PS00747">
    <property type="entry name" value="GLUTR"/>
    <property type="match status" value="1"/>
</dbReference>
<feature type="chain" id="PRO_1000075419" description="Glutamyl-tRNA reductase">
    <location>
        <begin position="1"/>
        <end position="425"/>
    </location>
</feature>
<feature type="active site" description="Nucleophile" evidence="1">
    <location>
        <position position="50"/>
    </location>
</feature>
<feature type="binding site" evidence="1">
    <location>
        <begin position="49"/>
        <end position="52"/>
    </location>
    <ligand>
        <name>substrate</name>
    </ligand>
</feature>
<feature type="binding site" evidence="1">
    <location>
        <position position="107"/>
    </location>
    <ligand>
        <name>substrate</name>
    </ligand>
</feature>
<feature type="binding site" evidence="1">
    <location>
        <begin position="112"/>
        <end position="114"/>
    </location>
    <ligand>
        <name>substrate</name>
    </ligand>
</feature>
<feature type="binding site" evidence="1">
    <location>
        <position position="118"/>
    </location>
    <ligand>
        <name>substrate</name>
    </ligand>
</feature>
<feature type="binding site" evidence="1">
    <location>
        <begin position="187"/>
        <end position="192"/>
    </location>
    <ligand>
        <name>NADP(+)</name>
        <dbReference type="ChEBI" id="CHEBI:58349"/>
    </ligand>
</feature>
<feature type="site" description="Important for activity" evidence="1">
    <location>
        <position position="97"/>
    </location>
</feature>
<proteinExistence type="inferred from homology"/>
<name>HEM1_PSEPG</name>
<organism>
    <name type="scientific">Pseudomonas putida (strain GB-1)</name>
    <dbReference type="NCBI Taxonomy" id="76869"/>
    <lineage>
        <taxon>Bacteria</taxon>
        <taxon>Pseudomonadati</taxon>
        <taxon>Pseudomonadota</taxon>
        <taxon>Gammaproteobacteria</taxon>
        <taxon>Pseudomonadales</taxon>
        <taxon>Pseudomonadaceae</taxon>
        <taxon>Pseudomonas</taxon>
    </lineage>
</organism>
<sequence>MAFLALGINHKTASVDVRERVAFTPEQLVDALQQLCRLTSSREAAILSTCNRSELYIEQDHLSADAVLQWLADYHRLSLDELRASAYVHEEHDAVKHMMRVASGLDSLVLGEPQILGQMKSAYAVAREAGTVGPLLGRLFQATFSAAKQVRTDTAIGENPVSVAFAAVSLAKQIFADLGRSQALLIGAGETITLVARHLHEQGVRRIVVANRTLERASILAEQFGAHAVLLADIPQELANSDIVISSTASQLPILGKGAVESALKQRRHKPIFMVDIAVPRDIETEVGELDDVYLYTVDDLHDVVAENLKSRQGAAQAAEELVTVGAEDFMLRLRELAAVDVLKAYRQQSERLRDEELQKAQRLLANGGNPEDVLAQLARGLTNKLLHAPSVQLKKLSAEGRVDALAMAQELFALNEGSTDKSPQ</sequence>
<evidence type="ECO:0000255" key="1">
    <source>
        <dbReference type="HAMAP-Rule" id="MF_00087"/>
    </source>
</evidence>
<protein>
    <recommendedName>
        <fullName evidence="1">Glutamyl-tRNA reductase</fullName>
        <shortName evidence="1">GluTR</shortName>
        <ecNumber evidence="1">1.2.1.70</ecNumber>
    </recommendedName>
</protein>
<gene>
    <name evidence="1" type="primary">hemA</name>
    <name type="ordered locus">PputGB1_0773</name>
</gene>